<organism>
    <name type="scientific">Methanocaldococcus jannaschii (strain ATCC 43067 / DSM 2661 / JAL-1 / JCM 10045 / NBRC 100440)</name>
    <name type="common">Methanococcus jannaschii</name>
    <dbReference type="NCBI Taxonomy" id="243232"/>
    <lineage>
        <taxon>Archaea</taxon>
        <taxon>Methanobacteriati</taxon>
        <taxon>Methanobacteriota</taxon>
        <taxon>Methanomada group</taxon>
        <taxon>Methanococci</taxon>
        <taxon>Methanococcales</taxon>
        <taxon>Methanocaldococcaceae</taxon>
        <taxon>Methanocaldococcus</taxon>
    </lineage>
</organism>
<comment type="function">
    <text evidence="1">Toxic component of a type II toxin-antitoxin (TA) system. Its cognate antitoxin is RelB1 (Potential).</text>
</comment>
<comment type="similarity">
    <text evidence="1">Belongs to the RelE toxin family.</text>
</comment>
<gene>
    <name type="primary">relE1</name>
    <name type="ordered locus">MJ0071</name>
</gene>
<feature type="chain" id="PRO_0000106679" description="Putative toxin RelE1">
    <location>
        <begin position="1"/>
        <end position="90"/>
    </location>
</feature>
<protein>
    <recommendedName>
        <fullName>Putative toxin RelE1</fullName>
    </recommendedName>
</protein>
<accession>Q60374</accession>
<name>RELE1_METJA</name>
<reference key="1">
    <citation type="journal article" date="1996" name="Science">
        <title>Complete genome sequence of the methanogenic archaeon, Methanococcus jannaschii.</title>
        <authorList>
            <person name="Bult C.J."/>
            <person name="White O."/>
            <person name="Olsen G.J."/>
            <person name="Zhou L."/>
            <person name="Fleischmann R.D."/>
            <person name="Sutton G.G."/>
            <person name="Blake J.A."/>
            <person name="FitzGerald L.M."/>
            <person name="Clayton R.A."/>
            <person name="Gocayne J.D."/>
            <person name="Kerlavage A.R."/>
            <person name="Dougherty B.A."/>
            <person name="Tomb J.-F."/>
            <person name="Adams M.D."/>
            <person name="Reich C.I."/>
            <person name="Overbeek R."/>
            <person name="Kirkness E.F."/>
            <person name="Weinstock K.G."/>
            <person name="Merrick J.M."/>
            <person name="Glodek A."/>
            <person name="Scott J.L."/>
            <person name="Geoghagen N.S.M."/>
            <person name="Weidman J.F."/>
            <person name="Fuhrmann J.L."/>
            <person name="Nguyen D."/>
            <person name="Utterback T.R."/>
            <person name="Kelley J.M."/>
            <person name="Peterson J.D."/>
            <person name="Sadow P.W."/>
            <person name="Hanna M.C."/>
            <person name="Cotton M.D."/>
            <person name="Roberts K.M."/>
            <person name="Hurst M.A."/>
            <person name="Kaine B.P."/>
            <person name="Borodovsky M."/>
            <person name="Klenk H.-P."/>
            <person name="Fraser C.M."/>
            <person name="Smith H.O."/>
            <person name="Woese C.R."/>
            <person name="Venter J.C."/>
        </authorList>
    </citation>
    <scope>NUCLEOTIDE SEQUENCE [LARGE SCALE GENOMIC DNA]</scope>
    <source>
        <strain>ATCC 43067 / DSM 2661 / JAL-1 / JCM 10045 / NBRC 100440</strain>
    </source>
</reference>
<reference key="2">
    <citation type="journal article" date="2005" name="Nucleic Acids Res.">
        <title>Toxin-antitoxin loci are highly abundant in free-living but lost from host-associated prokaryotes.</title>
        <authorList>
            <person name="Pandey D.P."/>
            <person name="Gerdes K."/>
        </authorList>
    </citation>
    <scope>POSSIBLE FUNCTION</scope>
    <source>
        <strain>ATCC 43067 / DSM 2661 / JAL-1 / JCM 10045 / NBRC 100440</strain>
    </source>
</reference>
<evidence type="ECO:0000305" key="1"/>
<dbReference type="EMBL" id="L77117">
    <property type="protein sequence ID" value="AAB98049.1"/>
    <property type="molecule type" value="Genomic_DNA"/>
</dbReference>
<dbReference type="PIR" id="G64308">
    <property type="entry name" value="G64308"/>
</dbReference>
<dbReference type="RefSeq" id="WP_010869563.1">
    <property type="nucleotide sequence ID" value="NC_000909.1"/>
</dbReference>
<dbReference type="SMR" id="Q60374"/>
<dbReference type="STRING" id="243232.MJ_0071"/>
<dbReference type="PaxDb" id="243232-MJ_0071"/>
<dbReference type="EnsemblBacteria" id="AAB98049">
    <property type="protein sequence ID" value="AAB98049"/>
    <property type="gene ID" value="MJ_0071"/>
</dbReference>
<dbReference type="GeneID" id="1450910"/>
<dbReference type="KEGG" id="mja:MJ_0071"/>
<dbReference type="eggNOG" id="arCOG01665">
    <property type="taxonomic scope" value="Archaea"/>
</dbReference>
<dbReference type="HOGENOM" id="CLU_155761_6_2_2"/>
<dbReference type="InParanoid" id="Q60374"/>
<dbReference type="OrthoDB" id="97626at2157"/>
<dbReference type="PhylomeDB" id="Q60374"/>
<dbReference type="Proteomes" id="UP000000805">
    <property type="component" value="Chromosome"/>
</dbReference>
<dbReference type="Gene3D" id="3.30.2310.20">
    <property type="entry name" value="RelE-like"/>
    <property type="match status" value="1"/>
</dbReference>
<dbReference type="InterPro" id="IPR007712">
    <property type="entry name" value="RelE/ParE_toxin"/>
</dbReference>
<dbReference type="InterPro" id="IPR035093">
    <property type="entry name" value="RelE/ParE_toxin_dom_sf"/>
</dbReference>
<dbReference type="InterPro" id="IPR052747">
    <property type="entry name" value="TA_system_RelE_toxin"/>
</dbReference>
<dbReference type="PANTHER" id="PTHR38813">
    <property type="match status" value="1"/>
</dbReference>
<dbReference type="PANTHER" id="PTHR38813:SF1">
    <property type="entry name" value="TOXIN RELE1-RELATED"/>
    <property type="match status" value="1"/>
</dbReference>
<dbReference type="Pfam" id="PF05016">
    <property type="entry name" value="ParE_toxin"/>
    <property type="match status" value="1"/>
</dbReference>
<dbReference type="SUPFAM" id="SSF143011">
    <property type="entry name" value="RelE-like"/>
    <property type="match status" value="1"/>
</dbReference>
<proteinExistence type="inferred from homology"/>
<sequence>MKFNVEIHKRVLKDLKDLPPSNLKKFKELIETLKTNPIPKEKFDIKRLKGSDEVYRVRIGKFRVQYVVLWDDRIIIIRKISRREGAYKNP</sequence>
<keyword id="KW-1185">Reference proteome</keyword>
<keyword id="KW-1277">Toxin-antitoxin system</keyword>